<keyword id="KW-0007">Acetylation</keyword>
<keyword id="KW-0249">Electron transport</keyword>
<keyword id="KW-0472">Membrane</keyword>
<keyword id="KW-0496">Mitochondrion</keyword>
<keyword id="KW-0999">Mitochondrion inner membrane</keyword>
<keyword id="KW-0597">Phosphoprotein</keyword>
<keyword id="KW-1185">Reference proteome</keyword>
<keyword id="KW-0679">Respiratory chain</keyword>
<keyword id="KW-0813">Transport</keyword>
<gene>
    <name type="primary">NDUFA7</name>
</gene>
<name>NDUA7_GORGO</name>
<organism>
    <name type="scientific">Gorilla gorilla gorilla</name>
    <name type="common">Western lowland gorilla</name>
    <dbReference type="NCBI Taxonomy" id="9595"/>
    <lineage>
        <taxon>Eukaryota</taxon>
        <taxon>Metazoa</taxon>
        <taxon>Chordata</taxon>
        <taxon>Craniata</taxon>
        <taxon>Vertebrata</taxon>
        <taxon>Euteleostomi</taxon>
        <taxon>Mammalia</taxon>
        <taxon>Eutheria</taxon>
        <taxon>Euarchontoglires</taxon>
        <taxon>Primates</taxon>
        <taxon>Haplorrhini</taxon>
        <taxon>Catarrhini</taxon>
        <taxon>Hominidae</taxon>
        <taxon>Gorilla</taxon>
    </lineage>
</organism>
<dbReference type="EMBL" id="DQ885727">
    <property type="protein sequence ID" value="ABH12236.1"/>
    <property type="status" value="ALT_INIT"/>
    <property type="molecule type" value="mRNA"/>
</dbReference>
<dbReference type="SMR" id="Q0MQA7"/>
<dbReference type="FunCoup" id="Q0MQA7">
    <property type="interactions" value="940"/>
</dbReference>
<dbReference type="STRING" id="9593.ENSGGOP00000029848"/>
<dbReference type="eggNOG" id="KOG4630">
    <property type="taxonomic scope" value="Eukaryota"/>
</dbReference>
<dbReference type="InParanoid" id="Q0MQA7"/>
<dbReference type="Proteomes" id="UP000001519">
    <property type="component" value="Unplaced"/>
</dbReference>
<dbReference type="GO" id="GO:0005743">
    <property type="term" value="C:mitochondrial inner membrane"/>
    <property type="evidence" value="ECO:0007669"/>
    <property type="project" value="UniProtKB-SubCell"/>
</dbReference>
<dbReference type="GO" id="GO:0045271">
    <property type="term" value="C:respiratory chain complex I"/>
    <property type="evidence" value="ECO:0000250"/>
    <property type="project" value="UniProtKB"/>
</dbReference>
<dbReference type="GO" id="GO:0006120">
    <property type="term" value="P:mitochondrial electron transport, NADH to ubiquinone"/>
    <property type="evidence" value="ECO:0000318"/>
    <property type="project" value="GO_Central"/>
</dbReference>
<dbReference type="InterPro" id="IPR009947">
    <property type="entry name" value="NDUA7"/>
</dbReference>
<dbReference type="PANTHER" id="PTHR12485:SF1">
    <property type="entry name" value="NADH DEHYDROGENASE [UBIQUINONE] 1 ALPHA SUBCOMPLEX SUBUNIT 7"/>
    <property type="match status" value="1"/>
</dbReference>
<dbReference type="PANTHER" id="PTHR12485">
    <property type="entry name" value="NADH-UBIQUINONE OXIDOREDUCTASE SUBUNIT B"/>
    <property type="match status" value="1"/>
</dbReference>
<dbReference type="Pfam" id="PF07347">
    <property type="entry name" value="CI-B14_5a"/>
    <property type="match status" value="1"/>
</dbReference>
<protein>
    <recommendedName>
        <fullName>NADH dehydrogenase [ubiquinone] 1 alpha subcomplex subunit 7</fullName>
    </recommendedName>
    <alternativeName>
        <fullName>Complex I-B14.5a</fullName>
        <shortName>CI-B14.5a</shortName>
    </alternativeName>
    <alternativeName>
        <fullName>NADH-ubiquinone oxidoreductase subunit B14.5a</fullName>
    </alternativeName>
</protein>
<reference key="1">
    <citation type="journal article" date="2006" name="Gene">
        <title>Adaptive selection of mitochondrial complex I subunits during primate radiation.</title>
        <authorList>
            <person name="Mishmar D."/>
            <person name="Ruiz-Pesini E."/>
            <person name="Mondragon-Palomino M."/>
            <person name="Procaccio V."/>
            <person name="Gaut B."/>
            <person name="Wallace D.C."/>
        </authorList>
    </citation>
    <scope>NUCLEOTIDE SEQUENCE [MRNA]</scope>
</reference>
<proteinExistence type="inferred from homology"/>
<comment type="function">
    <text evidence="1">Accessory subunit of the mitochondrial membrane respiratory chain NADH dehydrogenase (Complex I), that is believed not to be involved in catalysis. Complex I functions in the transfer of electrons from NADH to the respiratory chain. The immediate electron acceptor for the enzyme is believed to be ubiquinone.</text>
</comment>
<comment type="subunit">
    <text evidence="1">Complex I is composed of 45 different subunits.</text>
</comment>
<comment type="subcellular location">
    <subcellularLocation>
        <location evidence="1">Mitochondrion inner membrane</location>
        <topology evidence="1">Peripheral membrane protein</topology>
        <orientation evidence="1">Matrix side</orientation>
    </subcellularLocation>
</comment>
<comment type="similarity">
    <text evidence="5">Belongs to the complex I NDUFA7 subunit family.</text>
</comment>
<comment type="sequence caution" evidence="5">
    <conflict type="erroneous initiation">
        <sequence resource="EMBL-CDS" id="ABH12236"/>
    </conflict>
</comment>
<accession>Q0MQA7</accession>
<sequence length="113" mass="12565">MASATRLIQRLRNWASGHDLQAKLQLRYQEISKRTQPPPKLPVGPSHKLSNNYYCTRDGRRESVPPSIIMSSQKALVSGKPAESSAVAATEKKAVTPAPPIKRWELSSDQPYL</sequence>
<evidence type="ECO:0000250" key="1">
    <source>
        <dbReference type="UniProtKB" id="O95182"/>
    </source>
</evidence>
<evidence type="ECO:0000250" key="2">
    <source>
        <dbReference type="UniProtKB" id="Q05752"/>
    </source>
</evidence>
<evidence type="ECO:0000250" key="3">
    <source>
        <dbReference type="UniProtKB" id="Q9Z1P6"/>
    </source>
</evidence>
<evidence type="ECO:0000256" key="4">
    <source>
        <dbReference type="SAM" id="MobiDB-lite"/>
    </source>
</evidence>
<evidence type="ECO:0000305" key="5"/>
<feature type="initiator methionine" description="Removed" evidence="2">
    <location>
        <position position="1"/>
    </location>
</feature>
<feature type="chain" id="PRO_0000251805" description="NADH dehydrogenase [ubiquinone] 1 alpha subcomplex subunit 7">
    <location>
        <begin position="2"/>
        <end position="113"/>
    </location>
</feature>
<feature type="region of interest" description="Disordered" evidence="4">
    <location>
        <begin position="31"/>
        <end position="51"/>
    </location>
</feature>
<feature type="region of interest" description="Disordered" evidence="4">
    <location>
        <begin position="86"/>
        <end position="113"/>
    </location>
</feature>
<feature type="modified residue" description="N-acetylalanine" evidence="2">
    <location>
        <position position="2"/>
    </location>
</feature>
<feature type="modified residue" description="N6-acetyllysine" evidence="3">
    <location>
        <position position="40"/>
    </location>
</feature>
<feature type="modified residue" description="Phosphothreonine" evidence="1">
    <location>
        <position position="96"/>
    </location>
</feature>